<accession>P00784</accession>
<dbReference type="EC" id="3.4.22.2" evidence="11 12 14"/>
<dbReference type="EMBL" id="M15203">
    <property type="protein sequence ID" value="AAB02650.1"/>
    <property type="molecule type" value="mRNA"/>
</dbReference>
<dbReference type="PIR" id="A26466">
    <property type="entry name" value="PPPA"/>
</dbReference>
<dbReference type="PDB" id="1BP4">
    <property type="method" value="X-ray"/>
    <property type="resolution" value="2.20 A"/>
    <property type="chains" value="A=134-345"/>
</dbReference>
<dbReference type="PDB" id="1BQI">
    <property type="method" value="X-ray"/>
    <property type="resolution" value="2.50 A"/>
    <property type="chains" value="A=134-345"/>
</dbReference>
<dbReference type="PDB" id="1CVZ">
    <property type="method" value="X-ray"/>
    <property type="resolution" value="1.70 A"/>
    <property type="chains" value="A=134-345"/>
</dbReference>
<dbReference type="PDB" id="1KHP">
    <property type="method" value="X-ray"/>
    <property type="resolution" value="2.00 A"/>
    <property type="chains" value="A=134-345"/>
</dbReference>
<dbReference type="PDB" id="1KHQ">
    <property type="method" value="X-ray"/>
    <property type="resolution" value="1.60 A"/>
    <property type="chains" value="A=134-345"/>
</dbReference>
<dbReference type="PDB" id="1PAD">
    <property type="method" value="X-ray"/>
    <property type="resolution" value="2.80 A"/>
    <property type="chains" value="A=134-345"/>
</dbReference>
<dbReference type="PDB" id="1PE6">
    <property type="method" value="X-ray"/>
    <property type="resolution" value="2.10 A"/>
    <property type="chains" value="A=134-345"/>
</dbReference>
<dbReference type="PDB" id="1PIP">
    <property type="method" value="X-ray"/>
    <property type="resolution" value="1.70 A"/>
    <property type="chains" value="A=134-345"/>
</dbReference>
<dbReference type="PDB" id="1POP">
    <property type="method" value="X-ray"/>
    <property type="resolution" value="2.10 A"/>
    <property type="chains" value="A=134-345"/>
</dbReference>
<dbReference type="PDB" id="1PPD">
    <property type="method" value="X-ray"/>
    <property type="resolution" value="2.00 A"/>
    <property type="chains" value="A=134-345"/>
</dbReference>
<dbReference type="PDB" id="1PPN">
    <property type="method" value="X-ray"/>
    <property type="resolution" value="1.60 A"/>
    <property type="chains" value="A=134-345"/>
</dbReference>
<dbReference type="PDB" id="1PPP">
    <property type="method" value="X-ray"/>
    <property type="resolution" value="1.90 A"/>
    <property type="chains" value="A=134-345"/>
</dbReference>
<dbReference type="PDB" id="1STF">
    <property type="method" value="X-ray"/>
    <property type="resolution" value="2.37 A"/>
    <property type="chains" value="E=134-345"/>
</dbReference>
<dbReference type="PDB" id="2CIO">
    <property type="method" value="X-ray"/>
    <property type="resolution" value="1.50 A"/>
    <property type="chains" value="A=134-345"/>
</dbReference>
<dbReference type="PDB" id="2PAD">
    <property type="method" value="X-ray"/>
    <property type="resolution" value="2.80 A"/>
    <property type="chains" value="A=134-345"/>
</dbReference>
<dbReference type="PDB" id="3E1Z">
    <property type="method" value="X-ray"/>
    <property type="resolution" value="1.86 A"/>
    <property type="chains" value="B=134-345"/>
</dbReference>
<dbReference type="PDB" id="3IMA">
    <property type="method" value="X-ray"/>
    <property type="resolution" value="2.03 A"/>
    <property type="chains" value="A/C=134-345"/>
</dbReference>
<dbReference type="PDB" id="3LFY">
    <property type="method" value="X-ray"/>
    <property type="resolution" value="2.60 A"/>
    <property type="chains" value="A/C=134-345"/>
</dbReference>
<dbReference type="PDB" id="3TNX">
    <property type="method" value="X-ray"/>
    <property type="resolution" value="2.62 A"/>
    <property type="chains" value="A/C=27-345"/>
</dbReference>
<dbReference type="PDB" id="3USV">
    <property type="method" value="X-ray"/>
    <property type="resolution" value="3.80 A"/>
    <property type="chains" value="A/C=27-345"/>
</dbReference>
<dbReference type="PDB" id="4PAD">
    <property type="method" value="X-ray"/>
    <property type="resolution" value="2.80 A"/>
    <property type="chains" value="A=134-345"/>
</dbReference>
<dbReference type="PDB" id="4QRG">
    <property type="method" value="X-ray"/>
    <property type="resolution" value="2.50 A"/>
    <property type="chains" value="A/B=27-345"/>
</dbReference>
<dbReference type="PDB" id="4QRV">
    <property type="method" value="X-ray"/>
    <property type="resolution" value="1.98 A"/>
    <property type="chains" value="A/B=27-345"/>
</dbReference>
<dbReference type="PDB" id="4QRX">
    <property type="method" value="X-ray"/>
    <property type="resolution" value="3.14 A"/>
    <property type="chains" value="A/C=27-345"/>
</dbReference>
<dbReference type="PDB" id="5PAD">
    <property type="method" value="X-ray"/>
    <property type="resolution" value="2.80 A"/>
    <property type="chains" value="A=134-345"/>
</dbReference>
<dbReference type="PDB" id="6H8T">
    <property type="method" value="X-ray"/>
    <property type="resolution" value="2.10 A"/>
    <property type="chains" value="A/J=134-345"/>
</dbReference>
<dbReference type="PDB" id="6PAD">
    <property type="method" value="X-ray"/>
    <property type="resolution" value="2.80 A"/>
    <property type="chains" value="A=134-345"/>
</dbReference>
<dbReference type="PDB" id="6TCX">
    <property type="method" value="X-ray"/>
    <property type="resolution" value="1.65 A"/>
    <property type="chains" value="AAA=134-345"/>
</dbReference>
<dbReference type="PDB" id="9PAP">
    <property type="method" value="X-ray"/>
    <property type="resolution" value="1.65 A"/>
    <property type="chains" value="A=134-345"/>
</dbReference>
<dbReference type="PDBsum" id="1BP4"/>
<dbReference type="PDBsum" id="1BQI"/>
<dbReference type="PDBsum" id="1CVZ"/>
<dbReference type="PDBsum" id="1KHP"/>
<dbReference type="PDBsum" id="1KHQ"/>
<dbReference type="PDBsum" id="1PAD"/>
<dbReference type="PDBsum" id="1PE6"/>
<dbReference type="PDBsum" id="1PIP"/>
<dbReference type="PDBsum" id="1POP"/>
<dbReference type="PDBsum" id="1PPD"/>
<dbReference type="PDBsum" id="1PPN"/>
<dbReference type="PDBsum" id="1PPP"/>
<dbReference type="PDBsum" id="1STF"/>
<dbReference type="PDBsum" id="2CIO"/>
<dbReference type="PDBsum" id="2PAD"/>
<dbReference type="PDBsum" id="3E1Z"/>
<dbReference type="PDBsum" id="3IMA"/>
<dbReference type="PDBsum" id="3LFY"/>
<dbReference type="PDBsum" id="3TNX"/>
<dbReference type="PDBsum" id="3USV"/>
<dbReference type="PDBsum" id="4PAD"/>
<dbReference type="PDBsum" id="4QRG"/>
<dbReference type="PDBsum" id="4QRV"/>
<dbReference type="PDBsum" id="4QRX"/>
<dbReference type="PDBsum" id="5PAD"/>
<dbReference type="PDBsum" id="6H8T"/>
<dbReference type="PDBsum" id="6PAD"/>
<dbReference type="PDBsum" id="6TCX"/>
<dbReference type="PDBsum" id="9PAP"/>
<dbReference type="PCDDB" id="P00784"/>
<dbReference type="SMR" id="P00784"/>
<dbReference type="IntAct" id="P00784">
    <property type="interactions" value="1"/>
</dbReference>
<dbReference type="MINT" id="P00784"/>
<dbReference type="BindingDB" id="P00784"/>
<dbReference type="ChEMBL" id="CHEMBL4779"/>
<dbReference type="Allergome" id="709">
    <property type="allergen name" value="Cari p Papain"/>
</dbReference>
<dbReference type="MEROPS" id="C01.001"/>
<dbReference type="MEROPS" id="I29.003"/>
<dbReference type="BRENDA" id="3.4.22.2">
    <property type="organism ID" value="1191"/>
</dbReference>
<dbReference type="SABIO-RK" id="P00784"/>
<dbReference type="EvolutionaryTrace" id="P00784"/>
<dbReference type="GO" id="GO:0008234">
    <property type="term" value="F:cysteine-type peptidase activity"/>
    <property type="evidence" value="ECO:0007669"/>
    <property type="project" value="UniProtKB-KW"/>
</dbReference>
<dbReference type="GO" id="GO:0097655">
    <property type="term" value="F:serpin family protein binding"/>
    <property type="evidence" value="ECO:0000353"/>
    <property type="project" value="UniProtKB"/>
</dbReference>
<dbReference type="GO" id="GO:0006508">
    <property type="term" value="P:proteolysis"/>
    <property type="evidence" value="ECO:0007669"/>
    <property type="project" value="UniProtKB-KW"/>
</dbReference>
<dbReference type="CDD" id="cd02248">
    <property type="entry name" value="Peptidase_C1A"/>
    <property type="match status" value="1"/>
</dbReference>
<dbReference type="FunFam" id="3.90.70.10:FF:000204">
    <property type="entry name" value="Papain"/>
    <property type="match status" value="1"/>
</dbReference>
<dbReference type="Gene3D" id="3.90.70.10">
    <property type="entry name" value="Cysteine proteinases"/>
    <property type="match status" value="1"/>
</dbReference>
<dbReference type="InterPro" id="IPR038765">
    <property type="entry name" value="Papain-like_cys_pep_sf"/>
</dbReference>
<dbReference type="InterPro" id="IPR025661">
    <property type="entry name" value="Pept_asp_AS"/>
</dbReference>
<dbReference type="InterPro" id="IPR000169">
    <property type="entry name" value="Pept_cys_AS"/>
</dbReference>
<dbReference type="InterPro" id="IPR025660">
    <property type="entry name" value="Pept_his_AS"/>
</dbReference>
<dbReference type="InterPro" id="IPR013128">
    <property type="entry name" value="Peptidase_C1A"/>
</dbReference>
<dbReference type="InterPro" id="IPR000668">
    <property type="entry name" value="Peptidase_C1A_C"/>
</dbReference>
<dbReference type="InterPro" id="IPR039417">
    <property type="entry name" value="Peptidase_C1A_papain-like"/>
</dbReference>
<dbReference type="InterPro" id="IPR013201">
    <property type="entry name" value="Prot_inhib_I29"/>
</dbReference>
<dbReference type="PANTHER" id="PTHR12411">
    <property type="entry name" value="CYSTEINE PROTEASE FAMILY C1-RELATED"/>
    <property type="match status" value="1"/>
</dbReference>
<dbReference type="Pfam" id="PF08246">
    <property type="entry name" value="Inhibitor_I29"/>
    <property type="match status" value="1"/>
</dbReference>
<dbReference type="Pfam" id="PF00112">
    <property type="entry name" value="Peptidase_C1"/>
    <property type="match status" value="1"/>
</dbReference>
<dbReference type="PRINTS" id="PR00705">
    <property type="entry name" value="PAPAIN"/>
</dbReference>
<dbReference type="SMART" id="SM00848">
    <property type="entry name" value="Inhibitor_I29"/>
    <property type="match status" value="1"/>
</dbReference>
<dbReference type="SMART" id="SM00645">
    <property type="entry name" value="Pept_C1"/>
    <property type="match status" value="1"/>
</dbReference>
<dbReference type="SUPFAM" id="SSF54001">
    <property type="entry name" value="Cysteine proteinases"/>
    <property type="match status" value="1"/>
</dbReference>
<dbReference type="PROSITE" id="PS00640">
    <property type="entry name" value="THIOL_PROTEASE_ASN"/>
    <property type="match status" value="1"/>
</dbReference>
<dbReference type="PROSITE" id="PS00139">
    <property type="entry name" value="THIOL_PROTEASE_CYS"/>
    <property type="match status" value="1"/>
</dbReference>
<dbReference type="PROSITE" id="PS00639">
    <property type="entry name" value="THIOL_PROTEASE_HIS"/>
    <property type="match status" value="1"/>
</dbReference>
<name>PAPA1_CARPA</name>
<reference key="1">
    <citation type="journal article" date="1986" name="Gene">
        <title>Cloning and sequencing of papain-encoding cDNA.</title>
        <authorList>
            <person name="Cohen L.W."/>
            <person name="Coghlan V.M."/>
            <person name="Dihel L.C."/>
        </authorList>
    </citation>
    <scope>NUCLEOTIDE SEQUENCE [MRNA]</scope>
</reference>
<reference key="2">
    <citation type="journal article" date="1970" name="J. Biol. Chem.">
        <title>The complete amino acid sequence of papain. Additions and corrections.</title>
        <authorList>
            <person name="Mitchel R.E.J."/>
            <person name="Chaiken I.M."/>
            <person name="Smith E.L."/>
        </authorList>
    </citation>
    <scope>PROTEIN SEQUENCE OF 134-345</scope>
</reference>
<reference key="3">
    <citation type="journal article" date="1970" name="Biochem. J.">
        <title>A reinvestigation of residues 64-68 and 175 in papain. Evidence that residues 64 and 175 are asparagine.</title>
        <authorList>
            <person name="Husain S.S."/>
            <person name="Lowe G."/>
        </authorList>
    </citation>
    <scope>SEQUENCE REVISION TO 197</scope>
</reference>
<reference key="4">
    <citation type="journal article" date="1990" name="FEBS Lett.">
        <title>Selective cleavage of glycyl bonds by papaya proteinase IV.</title>
        <authorList>
            <person name="Buttle D.J."/>
            <person name="Ritonja A."/>
            <person name="Pearl L.H."/>
            <person name="Turk V."/>
            <person name="Barrett A.J."/>
        </authorList>
    </citation>
    <scope>FUNCTION</scope>
    <scope>CATALYTIC ACTIVITY</scope>
    <scope>BIOPHYSICOCHEMICAL PROPERTIES</scope>
</reference>
<reference key="5">
    <citation type="journal article" date="2010" name="Protein Eng. Des. Sel.">
        <title>Improving thermostability of papain through structure-based protein engineering.</title>
        <authorList>
            <person name="Choudhury D."/>
            <person name="Biswas S."/>
            <person name="Roy S."/>
            <person name="Dattagupta J.K."/>
        </authorList>
    </citation>
    <scope>MUTAGENESIS OF VAL-165; GLY-169 AND LYS-307</scope>
    <scope>BIOPHYSICOCHEMICAL PROPERTIES</scope>
</reference>
<reference key="6">
    <citation type="journal article" date="1968" name="Nature">
        <title>Structure of papain.</title>
        <authorList>
            <person name="Drenth J."/>
            <person name="Jansonius J.N."/>
            <person name="Koekoek R."/>
            <person name="Swen H.M."/>
            <person name="Wolthers B.G."/>
        </authorList>
    </citation>
    <scope>X-RAY CRYSTALLOGRAPHY (2.8 ANGSTROMS)</scope>
    <scope>ACTIVE SITES</scope>
</reference>
<reference key="7">
    <citation type="journal article" date="1976" name="Biochemistry">
        <title>Binding of chloromethyl ketone substrate analogues to crystalline papain.</title>
        <authorList>
            <person name="Drenth J."/>
            <person name="Kalk K.H."/>
            <person name="Swen H.M."/>
        </authorList>
    </citation>
    <scope>X-RAY CRYSTALLOGRAPHY (2.80 ANGSTROMS) OF 134-345 IN COMPLEX WITH SUBSTRATE ANALOGS</scope>
    <scope>DISULFIDE BONDS</scope>
    <scope>ACTIVE SITES</scope>
</reference>
<reference key="8">
    <citation type="journal article" date="1984" name="J. Mol. Biol.">
        <title>Structure of papain refined at 1.65-A resolution.</title>
        <authorList>
            <person name="Kamphuis I.G."/>
            <person name="Kalk K.H."/>
            <person name="Swarte M.B.A."/>
            <person name="Drenth J."/>
        </authorList>
    </citation>
    <scope>X-RAY CRYSTALLOGRAPHY (1.65 ANGSTROMS) OF 134-345</scope>
    <scope>DISULFIDE BONDS</scope>
    <scope>ACTIVE SITES</scope>
</reference>
<reference key="9">
    <citation type="journal article" date="1990" name="EMBO J.">
        <title>The refined 2.4 A X-ray crystal structure of recombinant human stefin B in complex with the cysteine proteinase papain: a novel type of proteinase inhibitor interaction.</title>
        <authorList>
            <person name="Stubbs M.T."/>
            <person name="Laber B."/>
            <person name="Bode W."/>
            <person name="Huber R."/>
            <person name="Jerala R."/>
            <person name="Lenarcic B."/>
            <person name="Turk V."/>
        </authorList>
    </citation>
    <scope>X-RAY CRYSTALLOGRAPHY (2.37 ANGSTROMS) OF 134-345</scope>
    <scope>DISULFIDE BONDS</scope>
</reference>
<reference key="10">
    <citation type="journal article" date="1991" name="J. Biol. Chem.">
        <title>Refined x-ray structure of papain.E-64-c complex at 2.1-A resolution.</title>
        <authorList>
            <person name="Yamamoto D."/>
            <person name="Matsumoto K."/>
            <person name="Ohishi H."/>
            <person name="Ishida T."/>
            <person name="Inoue M."/>
            <person name="Kitamura K."/>
            <person name="Mizuno H."/>
        </authorList>
    </citation>
    <scope>X-RAY CRYSTALLOGRAPHY (2.10 ANGSTROMS) OF 134-345 IN COMPLEX WITH E64</scope>
    <scope>DISULFIDE BONDS</scope>
    <scope>ACTIVITY REGULATION</scope>
    <scope>ACTIVE SITES</scope>
</reference>
<reference key="11">
    <citation type="journal article" date="1992" name="Biochemistry">
        <title>Crystal structure of papain-succinyl-Gln-Val-Val-Ala-Ala-p-nitroanilide complex at 1.7-A resolution: noncovalent binding mode of a common sequence of endogenous thiol protease inhibitors.</title>
        <authorList>
            <person name="Yamamoto A."/>
            <person name="Tomoo K."/>
            <person name="Doi M."/>
            <person name="Ohishi H."/>
            <person name="Inoue M."/>
            <person name="Ishida T."/>
            <person name="Yamamoto D."/>
            <person name="Tsuboi S."/>
            <person name="Okamoto H."/>
            <person name="Okada Y."/>
        </authorList>
    </citation>
    <scope>X-RAY CRYSTALLOGRAPHY (1.7 ANGSTROMS)</scope>
</reference>
<reference key="12">
    <citation type="journal article" date="1992" name="Acta Crystallogr. B">
        <title>Structure of monoclinic papain at 1.60-A resolution.</title>
        <authorList>
            <person name="Pickersgill R.W."/>
            <person name="Harris G.W."/>
            <person name="Garman E."/>
        </authorList>
    </citation>
    <scope>X-RAY CRYSTALLOGRAPHY (1.60 ANGSTROMS) OF 134-345</scope>
    <scope>DISULFIDE BONDS</scope>
</reference>
<reference key="13">
    <citation type="journal article" date="1993" name="FEBS Lett.">
        <title>X-ray crystallographic structure of a papain-leupeptin complex.</title>
        <authorList>
            <person name="Schroder E."/>
            <person name="Phillips C."/>
            <person name="Garman E."/>
            <person name="Harlos K."/>
            <person name="Crawford C."/>
        </authorList>
    </citation>
    <scope>X-RAY CRYSTALLOGRAPHY (2.10 ANGSTROMS) OF 134-345 IN COMPLEX WITH LEUPEPTIN</scope>
    <scope>DISULFIDE BONDS</scope>
    <scope>ACTIVITY REGULATION</scope>
</reference>
<reference key="14">
    <citation type="journal article" date="1998" name="J. Med. Chem.">
        <title>Use of papain as a model for the structure-based design of cathepsin K inhibitors: crystal structures of two papain-inhibitor complexes demonstrate binding to S'-subsites.</title>
        <authorList>
            <person name="LaLonde J.M."/>
            <person name="Zhao B."/>
            <person name="Smith W.W."/>
            <person name="Janson C.A."/>
            <person name="DesJarlais R.L."/>
            <person name="Tomaszek T.A."/>
            <person name="Carr T.J."/>
            <person name="Thompson S.K."/>
            <person name="Oh H.-J."/>
            <person name="Yamashita D.S."/>
            <person name="Veber D.F."/>
            <person name="Abdel-Meguid S.S."/>
        </authorList>
    </citation>
    <scope>X-RAY CRYSTALLOGRAPHY (2.20 ANGSTROMS) OF 134-345 IN COMPLEX WITH INHIBITORS</scope>
    <scope>DISULFIDE BONDS</scope>
</reference>
<reference key="15">
    <citation type="journal article" date="1999" name="Biochem. Biophys. Res. Commun.">
        <title>Inhibition mechanism of cathepsin L-specific inhibitors based on the crystal structure of papain-CLIK148 complex.</title>
        <authorList>
            <person name="Tsuge H."/>
            <person name="Nishimura T."/>
            <person name="Tada Y."/>
            <person name="Asao T."/>
            <person name="Turk D."/>
            <person name="Turk V."/>
            <person name="Katunuma N."/>
        </authorList>
    </citation>
    <scope>X-RAY CRYSTALLOGRAPHY (1.70 ANGSTROMS) OF 134-345 IN COMPLEX WITH THE INHIBITOR CLIK148</scope>
    <scope>DISULFIDE BONDS</scope>
</reference>
<reference key="16">
    <citation type="journal article" date="2004" name="J. Pept. Res.">
        <title>Two polymorphs of a covalent complex between papain and a diazomethylketone inhibitor.</title>
        <authorList>
            <person name="Janowski R."/>
            <person name="Kozak M."/>
            <person name="Jankowska E."/>
            <person name="Grzonka Z."/>
            <person name="Jaskolski M."/>
        </authorList>
    </citation>
    <scope>X-RAY CRYSTALLOGRAPHY (1.60 ANGSTROMS) OF 134-345 IN COMPLEX WITH INHIBITORS</scope>
    <scope>DISULFIDE BONDS</scope>
</reference>
<reference key="17">
    <citation type="journal article" date="2006" name="Acta Crystallogr. D">
        <title>High-resolution complex of papain with remnants of a cysteine protease inhibitor derived from Trypanosoma brucei.</title>
        <authorList>
            <person name="Alphey M.S."/>
            <person name="Hunter W.N."/>
        </authorList>
    </citation>
    <scope>X-RAY CRYSTALLOGRAPHY (1.50 ANGSTROMS) OF 134-345</scope>
    <scope>DISULFIDE BONDS</scope>
    <scope>ACTIVITY REGULATION</scope>
</reference>
<reference key="18">
    <citation type="journal article" date="2009" name="FEBS J.">
        <title>Crystal structure of the parasite inhibitor chagasin in complex with papain allows identification of structural requirements for broad reactivity and specificity determinants for target proteases.</title>
        <authorList>
            <person name="Redzynia I."/>
            <person name="Ljunggren A."/>
            <person name="Bujacz A."/>
            <person name="Abrahamson M."/>
            <person name="Jaskolski M."/>
            <person name="Bujacz G."/>
        </authorList>
    </citation>
    <scope>X-RAY CRYSTALLOGRAPHY (1.86 ANGSTROMS) OF 134-345</scope>
    <scope>DISULFIDE BONDS</scope>
</reference>
<reference key="19">
    <citation type="journal article" date="2011" name="Planta">
        <title>Crystal structure of tarocystatin-papain complex: implications for the inhibition property of group-2 phytocystatins.</title>
        <authorList>
            <person name="Chu M.-H."/>
            <person name="Liu K.-L."/>
            <person name="Wu H.-Y."/>
            <person name="Yeh K.-W."/>
            <person name="Cheng Y.-S."/>
        </authorList>
    </citation>
    <scope>X-RAY CRYSTALLOGRAPHY (2.03 ANGSTROMS) OF 134-345 IN COMPLEX WITH TAROCYSTATIN</scope>
    <scope>DISULFIDE BONDS</scope>
    <scope>FUNCTION</scope>
    <scope>CATALYTIC ACTIVITY</scope>
    <scope>ACTIVITY REGULATION</scope>
</reference>
<reference key="20">
    <citation type="submission" date="2011-11" db="PDB data bank">
        <title>Crystallographic analysis of pro-papain variant elucidates the structural basis of the step-wise activation mechanism of the zymogen.</title>
        <authorList>
            <person name="Roy S."/>
            <person name="Choudhury D."/>
            <person name="Biswas S."/>
            <person name="Dattagupta J.K."/>
        </authorList>
    </citation>
    <scope>X-RAY CRYSTALLOGRAPHY (3.80 ANGSTROMS) OF 27-345</scope>
</reference>
<reference key="21">
    <citation type="journal article" date="2012" name="Acta Crystallogr. D">
        <title>The structure of a thermostable mutant of pro-papain reveals its activation mechanism.</title>
        <authorList>
            <person name="Roy S."/>
            <person name="Choudhury D."/>
            <person name="Aich P."/>
            <person name="Dattagupta J.K."/>
            <person name="Biswas S."/>
        </authorList>
    </citation>
    <scope>X-RAY CRYSTALLOGRAPHY (2.62 ANGSTROMS) OF 27-345 OF A THERMOSTABLE MUTANT</scope>
    <scope>DISULFIDE BONDS</scope>
    <scope>FUNCTION</scope>
    <scope>MUTAGENESIS OF VAL-165; GLY-169 AND LYS-307</scope>
    <scope>CATALYTIC ACTIVITY</scope>
</reference>
<reference key="22">
    <citation type="submission" date="2014-07" db="PDB data bank">
        <title>Pro-peptide regulates the substrate specificity and zymogen activation process of papain: A structural and mechanistic insight.</title>
        <authorList>
            <person name="Dutta S."/>
            <person name="Choudhury D."/>
            <person name="Roy S."/>
            <person name="Biswas S."/>
        </authorList>
    </citation>
    <scope>X-RAY CRYSTALLOGRAPHY (1.98 ANGSTROMS) OF 27-345</scope>
    <scope>DISULFIDE BONDS</scope>
</reference>
<reference key="23">
    <citation type="journal article" date="2018" name="Metallomics">
        <title>Crystallographic evidence for unexpected selective tyrosine hydroxylations in an aerated achiral Ru-papain conjugate.</title>
        <authorList>
            <person name="Cherrier M.V."/>
            <person name="Amara P."/>
            <person name="Talbi B."/>
            <person name="Salmain M."/>
            <person name="Fontecilla-Camps J.C."/>
        </authorList>
    </citation>
    <scope>X-RAY CRYSTALLOGRAPHY (2.10 ANGSTROMS) OF 134-345 IN COMPLEX WITH RUTHENIUM CONTAINING ORGANOMETALLIC GROUPS</scope>
    <scope>DISULFIDE BONDS</scope>
</reference>
<reference key="24">
    <citation type="submission" date="2019-11" db="PDB data bank">
        <title>Papain bound to a natural cysteine protease inhibitor from Streptomyces mobaraensis.</title>
        <authorList>
            <person name="Kraemer A."/>
            <person name="Juettner N.E."/>
            <person name="Fuchsbauer H.-L."/>
            <person name="Edwards A.M."/>
            <person name="Arrowsmith C.H."/>
            <person name="Bountra C."/>
            <person name="Knapp S."/>
        </authorList>
    </citation>
    <scope>X-RAY CRYSTALLOGRAPHY (1.65 ANGSTROMS) OF 134-345</scope>
    <scope>DISULFIDE BONDS</scope>
</reference>
<protein>
    <recommendedName>
        <fullName>Papain</fullName>
        <ecNumber evidence="11 12 14">3.4.22.2</ecNumber>
    </recommendedName>
    <alternativeName>
        <fullName>Papaya proteinase I</fullName>
        <shortName>PPI</shortName>
    </alternativeName>
    <allergenName>Car p 1</allergenName>
</protein>
<proteinExistence type="evidence at protein level"/>
<keyword id="KW-0002">3D-structure</keyword>
<keyword id="KW-0020">Allergen</keyword>
<keyword id="KW-0903">Direct protein sequencing</keyword>
<keyword id="KW-1015">Disulfide bond</keyword>
<keyword id="KW-0378">Hydrolase</keyword>
<keyword id="KW-0645">Protease</keyword>
<keyword id="KW-0732">Signal</keyword>
<keyword id="KW-0788">Thiol protease</keyword>
<keyword id="KW-0865">Zymogen</keyword>
<evidence type="ECO:0000255" key="1"/>
<evidence type="ECO:0000255" key="2">
    <source>
        <dbReference type="PROSITE-ProRule" id="PRU10088"/>
    </source>
</evidence>
<evidence type="ECO:0000255" key="3">
    <source>
        <dbReference type="PROSITE-ProRule" id="PRU10089"/>
    </source>
</evidence>
<evidence type="ECO:0000255" key="4">
    <source>
        <dbReference type="PROSITE-ProRule" id="PRU10090"/>
    </source>
</evidence>
<evidence type="ECO:0000269" key="5">
    <source>
    </source>
</evidence>
<evidence type="ECO:0000269" key="6">
    <source>
    </source>
</evidence>
<evidence type="ECO:0000269" key="7">
    <source>
    </source>
</evidence>
<evidence type="ECO:0000269" key="8">
    <source>
    </source>
</evidence>
<evidence type="ECO:0000269" key="9">
    <source>
    </source>
</evidence>
<evidence type="ECO:0000269" key="10">
    <source>
    </source>
</evidence>
<evidence type="ECO:0000269" key="11">
    <source>
    </source>
</evidence>
<evidence type="ECO:0000269" key="12">
    <source>
    </source>
</evidence>
<evidence type="ECO:0000269" key="13">
    <source>
    </source>
</evidence>
<evidence type="ECO:0000269" key="14">
    <source>
    </source>
</evidence>
<evidence type="ECO:0000269" key="15">
    <source>
    </source>
</evidence>
<evidence type="ECO:0000269" key="16">
    <source>
    </source>
</evidence>
<evidence type="ECO:0000269" key="17">
    <source>
    </source>
</evidence>
<evidence type="ECO:0000269" key="18">
    <source>
    </source>
</evidence>
<evidence type="ECO:0000269" key="19">
    <source>
    </source>
</evidence>
<evidence type="ECO:0000269" key="20">
    <source>
    </source>
</evidence>
<evidence type="ECO:0000269" key="21">
    <source>
    </source>
</evidence>
<evidence type="ECO:0000269" key="22">
    <source ref="22"/>
</evidence>
<evidence type="ECO:0000269" key="23">
    <source ref="24"/>
</evidence>
<evidence type="ECO:0000303" key="24">
    <source>
    </source>
</evidence>
<evidence type="ECO:0000305" key="25"/>
<evidence type="ECO:0000305" key="26">
    <source>
    </source>
</evidence>
<evidence type="ECO:0007744" key="27">
    <source>
        <dbReference type="PDB" id="1BP4"/>
    </source>
</evidence>
<evidence type="ECO:0007744" key="28">
    <source>
        <dbReference type="PDB" id="1BQI"/>
    </source>
</evidence>
<evidence type="ECO:0007744" key="29">
    <source>
        <dbReference type="PDB" id="1CVZ"/>
    </source>
</evidence>
<evidence type="ECO:0007744" key="30">
    <source>
        <dbReference type="PDB" id="1KHP"/>
    </source>
</evidence>
<evidence type="ECO:0007744" key="31">
    <source>
        <dbReference type="PDB" id="1KHQ"/>
    </source>
</evidence>
<evidence type="ECO:0007744" key="32">
    <source>
        <dbReference type="PDB" id="1PAD"/>
    </source>
</evidence>
<evidence type="ECO:0007744" key="33">
    <source>
        <dbReference type="PDB" id="1PE6"/>
    </source>
</evidence>
<evidence type="ECO:0007744" key="34">
    <source>
        <dbReference type="PDB" id="1PIP"/>
    </source>
</evidence>
<evidence type="ECO:0007744" key="35">
    <source>
        <dbReference type="PDB" id="1POP"/>
    </source>
</evidence>
<evidence type="ECO:0007744" key="36">
    <source>
        <dbReference type="PDB" id="1PPD"/>
    </source>
</evidence>
<evidence type="ECO:0007744" key="37">
    <source>
        <dbReference type="PDB" id="1PPN"/>
    </source>
</evidence>
<evidence type="ECO:0007744" key="38">
    <source>
        <dbReference type="PDB" id="1PPP"/>
    </source>
</evidence>
<evidence type="ECO:0007744" key="39">
    <source>
        <dbReference type="PDB" id="1STF"/>
    </source>
</evidence>
<evidence type="ECO:0007744" key="40">
    <source>
        <dbReference type="PDB" id="2CIO"/>
    </source>
</evidence>
<evidence type="ECO:0007744" key="41">
    <source>
        <dbReference type="PDB" id="2PAD"/>
    </source>
</evidence>
<evidence type="ECO:0007744" key="42">
    <source>
        <dbReference type="PDB" id="3E1Z"/>
    </source>
</evidence>
<evidence type="ECO:0007744" key="43">
    <source>
        <dbReference type="PDB" id="3IMA"/>
    </source>
</evidence>
<evidence type="ECO:0007744" key="44">
    <source>
        <dbReference type="PDB" id="3LFY"/>
    </source>
</evidence>
<evidence type="ECO:0007744" key="45">
    <source>
        <dbReference type="PDB" id="3TNX"/>
    </source>
</evidence>
<evidence type="ECO:0007744" key="46">
    <source>
        <dbReference type="PDB" id="4PAD"/>
    </source>
</evidence>
<evidence type="ECO:0007744" key="47">
    <source>
        <dbReference type="PDB" id="4QRG"/>
    </source>
</evidence>
<evidence type="ECO:0007744" key="48">
    <source>
        <dbReference type="PDB" id="4QRV"/>
    </source>
</evidence>
<evidence type="ECO:0007744" key="49">
    <source>
        <dbReference type="PDB" id="4QRX"/>
    </source>
</evidence>
<evidence type="ECO:0007744" key="50">
    <source>
        <dbReference type="PDB" id="5PAD"/>
    </source>
</evidence>
<evidence type="ECO:0007744" key="51">
    <source>
        <dbReference type="PDB" id="6H8T"/>
    </source>
</evidence>
<evidence type="ECO:0007744" key="52">
    <source>
        <dbReference type="PDB" id="6PAD"/>
    </source>
</evidence>
<evidence type="ECO:0007744" key="53">
    <source>
        <dbReference type="PDB" id="6TCX"/>
    </source>
</evidence>
<evidence type="ECO:0007744" key="54">
    <source>
        <dbReference type="PDB" id="9PAP"/>
    </source>
</evidence>
<evidence type="ECO:0007829" key="55">
    <source>
        <dbReference type="PDB" id="1BP4"/>
    </source>
</evidence>
<evidence type="ECO:0007829" key="56">
    <source>
        <dbReference type="PDB" id="1BQI"/>
    </source>
</evidence>
<evidence type="ECO:0007829" key="57">
    <source>
        <dbReference type="PDB" id="1CVZ"/>
    </source>
</evidence>
<evidence type="ECO:0007829" key="58">
    <source>
        <dbReference type="PDB" id="2CIO"/>
    </source>
</evidence>
<evidence type="ECO:0007829" key="59">
    <source>
        <dbReference type="PDB" id="3LFY"/>
    </source>
</evidence>
<evidence type="ECO:0007829" key="60">
    <source>
        <dbReference type="PDB" id="3TNX"/>
    </source>
</evidence>
<evidence type="ECO:0007829" key="61">
    <source>
        <dbReference type="PDB" id="4QRG"/>
    </source>
</evidence>
<evidence type="ECO:0007829" key="62">
    <source>
        <dbReference type="PDB" id="4QRV"/>
    </source>
</evidence>
<comment type="function">
    <text evidence="11 12 14">Cysteine proteinase with a high level of diversity in substrate specificity, an amino acid bearing a large hydrophobic side chain at the P2 position is preferred.</text>
</comment>
<comment type="catalytic activity">
    <reaction evidence="11 12 14">
        <text>Hydrolysis of proteins with broad specificity for peptide bonds, but preference for an amino acid bearing a large hydrophobic side chain at the P2 position. Does not accept Val in P1'.</text>
        <dbReference type="EC" id="3.4.22.2"/>
    </reaction>
</comment>
<comment type="activity regulation">
    <text evidence="8 11 19 24">Repressed by the active-site-directed cysteine protease inhibitor E64 (L-trans-epoxysuccinyl-leucylamide-(4-guanido)-butane) produced by Aspergillus japonicus (PubMed:1860874). Inhibited by the inhibitor of cysteine proteases from Trypanosoma brucei (TbICP, rhodesain) and Colocasia esculenta cv. Kaohsiung no. 1 (CeCPI, tarocystatin) (PubMed:16754967, PubMed:21416241). Repressed by leupeptin, a peptidic cysteine, serine and threonine protease inhibitor (PubMed:8416808).</text>
</comment>
<comment type="biophysicochemical properties">
    <kinetics>
        <KM evidence="12">0.293 mM for L-pyroglutamyl-L-phenylalanyl-L-leucyl-p-nitroanilide</KM>
        <KM evidence="12">2.95 mM for N-benzoyl-DL-arginine p-nitroanilide</KM>
        <KM evidence="14">1.4 mM for Boc-Ala-Ala-Gly-NHPhNO(2)</KM>
        <KM evidence="14">0.14 mM for Boc-Ala-Ala-Gly-NHMec</KM>
        <text evidence="12 14">kcat is 1.021 sec(-1) with L-pyroglutamyl-L-phenylalanyl-L-leucyl-p-nitroanilide as substrate (PubMed:23151624). kcat is 0.73 sec(-1) with N-benzoyl-DL-arginine p-nitroanilide as substrate (PubMed:23151624). kcat is 1.6 sec(-1) with Boc-Ala-Ala-Gly-NHPhNO(2) as substrate (PubMed:2404797). kcat is 2 sec(-1) with Boc-Ala-Ala-Gly-NHMec as substrate (PubMed:2404797).</text>
    </kinetics>
    <phDependence>
        <text evidence="10">Optimum pH is 4.</text>
    </phDependence>
    <temperatureDependence>
        <text evidence="10">Optimum temperature is 50 degrees Celsius (PubMed:20304972). Unstable upon 65 degrees Celsius (PubMed:20304972).</text>
    </temperatureDependence>
</comment>
<comment type="interaction">
    <interactant intactId="EBI-8501709">
        <id>P00784</id>
    </interactant>
    <interactant intactId="EBI-724303">
        <id>P01040</id>
        <label>CSTA</label>
    </interactant>
    <organismsDiffer>true</organismsDiffer>
    <experiments>2</experiments>
</comment>
<comment type="allergen">
    <text>Causes an allergic reaction in human.</text>
</comment>
<comment type="similarity">
    <text evidence="2 3 4">Belongs to the peptidase C1 family.</text>
</comment>
<organism>
    <name type="scientific">Carica papaya</name>
    <name type="common">Papaya</name>
    <dbReference type="NCBI Taxonomy" id="3649"/>
    <lineage>
        <taxon>Eukaryota</taxon>
        <taxon>Viridiplantae</taxon>
        <taxon>Streptophyta</taxon>
        <taxon>Embryophyta</taxon>
        <taxon>Tracheophyta</taxon>
        <taxon>Spermatophyta</taxon>
        <taxon>Magnoliopsida</taxon>
        <taxon>eudicotyledons</taxon>
        <taxon>Gunneridae</taxon>
        <taxon>Pentapetalae</taxon>
        <taxon>rosids</taxon>
        <taxon>malvids</taxon>
        <taxon>Brassicales</taxon>
        <taxon>Caricaceae</taxon>
        <taxon>Carica</taxon>
    </lineage>
</organism>
<feature type="signal peptide" evidence="1">
    <location>
        <begin position="1"/>
        <end position="18"/>
    </location>
</feature>
<feature type="propeptide" id="PRO_0000026406" description="Activation peptide" evidence="16">
    <location>
        <begin position="19"/>
        <end position="133"/>
    </location>
</feature>
<feature type="chain" id="PRO_0000026407" description="Papain">
    <location>
        <begin position="134"/>
        <end position="345"/>
    </location>
</feature>
<feature type="active site" evidence="2 17 18 20 26 32 54">
    <location>
        <position position="158"/>
    </location>
</feature>
<feature type="active site" evidence="3 18 20 32 54">
    <location>
        <position position="292"/>
    </location>
</feature>
<feature type="active site" evidence="4 17 18 20 32 54">
    <location>
        <position position="308"/>
    </location>
</feature>
<feature type="binding site" description="covalent" evidence="8 33 38">
    <location>
        <position position="158"/>
    </location>
    <ligand>
        <name>E64</name>
        <dbReference type="ChEBI" id="CHEBI:192370"/>
        <note>inhibitor; produced by Aspergillus japonicus</note>
    </ligand>
</feature>
<feature type="binding site" description="covalent" evidence="19 35">
    <location>
        <position position="158"/>
    </location>
    <ligand>
        <name>leupeptin</name>
        <dbReference type="ChEBI" id="CHEBI:192489"/>
        <note>inhibitor; produced by actinomycetes</note>
    </ligand>
</feature>
<feature type="disulfide bond" evidence="5 6 7 8 9 11 12 13 15 16 18 19 20 21 22 23 27 28 29 30 31 32 33 34 35 36 37 38 39 40 41 42 43 44 45 46 47 48 49 50 51 52 53 54">
    <location>
        <begin position="155"/>
        <end position="196"/>
    </location>
</feature>
<feature type="disulfide bond" evidence="5 6 7 8 9 11 12 13 15 16 18 19 20 21 22 23 27 28 29 30 31 32 33 34 35 36 37 38 39 40 41 42 43 44 45 46 47 48 49 51 52 53 54">
    <location>
        <begin position="189"/>
        <end position="228"/>
    </location>
</feature>
<feature type="disulfide bond" evidence="5 6 7 8 9 11 12 13 15 16 18 19 20 21 22 23 27 28 29 30 31 32 33 34 35 36 37 38 39 40 41 42 43 44 45 46 47 48 49 50 51 52 53 54">
    <location>
        <begin position="286"/>
        <end position="333"/>
    </location>
</feature>
<feature type="mutagenesis site" description="Slightly enhanced thermostability and higher optimum temperature; when associated with R-307. Enhanced thermostability and higher optimum temperature; when associated with S-169 and R-307." evidence="10">
    <original>V</original>
    <variation>S</variation>
    <location>
        <position position="165"/>
    </location>
</feature>
<feature type="mutagenesis site" description="Enhanced thermostability and higher optimum temperature; when associated with S-165 and R-307." evidence="10">
    <original>G</original>
    <variation>S</variation>
    <location>
        <position position="169"/>
    </location>
</feature>
<feature type="mutagenesis site" description="Unstable. Slightly enhanced thermostability and higher optimum temperature; when associated with S-165. Enhanced thermostability and higher optimum temperature; when associated with S-165 and S-169." evidence="10">
    <original>K</original>
    <variation>R</variation>
    <location>
        <position position="307"/>
    </location>
</feature>
<feature type="sequence conflict" description="In Ref. 2; AA sequence." evidence="25" ref="2">
    <original>E</original>
    <variation>Q</variation>
    <location>
        <position position="180"/>
    </location>
</feature>
<feature type="sequence conflict" description="In Ref. 2; AA sequence." evidence="25" ref="2">
    <original>YP</original>
    <variation>PY</variation>
    <location>
        <begin position="219"/>
        <end position="220"/>
    </location>
</feature>
<feature type="sequence conflict" description="In Ref. 2; AA sequence." evidence="25" ref="2">
    <original>E</original>
    <variation>Q</variation>
    <location>
        <position position="251"/>
    </location>
</feature>
<feature type="sequence conflict" description="In Ref. 2; AA sequence." evidence="25" ref="2">
    <original>E</original>
    <variation>Q</variation>
    <location>
        <position position="268"/>
    </location>
</feature>
<feature type="helix" evidence="62">
    <location>
        <begin position="35"/>
        <end position="38"/>
    </location>
</feature>
<feature type="helix" evidence="62">
    <location>
        <begin position="41"/>
        <end position="54"/>
    </location>
</feature>
<feature type="helix" evidence="62">
    <location>
        <begin position="62"/>
        <end position="82"/>
    </location>
</feature>
<feature type="strand" evidence="62">
    <location>
        <begin position="88"/>
        <end position="91"/>
    </location>
</feature>
<feature type="turn" evidence="62">
    <location>
        <begin position="95"/>
        <end position="98"/>
    </location>
</feature>
<feature type="helix" evidence="62">
    <location>
        <begin position="101"/>
        <end position="106"/>
    </location>
</feature>
<feature type="strand" evidence="62">
    <location>
        <begin position="107"/>
        <end position="109"/>
    </location>
</feature>
<feature type="strand" evidence="60">
    <location>
        <begin position="119"/>
        <end position="124"/>
    </location>
</feature>
<feature type="turn" evidence="58">
    <location>
        <begin position="140"/>
        <end position="144"/>
    </location>
</feature>
<feature type="strand" evidence="58">
    <location>
        <begin position="154"/>
        <end position="156"/>
    </location>
</feature>
<feature type="helix" evidence="58">
    <location>
        <begin position="158"/>
        <end position="175"/>
    </location>
</feature>
<feature type="helix" evidence="58">
    <location>
        <begin position="183"/>
        <end position="189"/>
    </location>
</feature>
<feature type="strand" evidence="55">
    <location>
        <begin position="191"/>
        <end position="193"/>
    </location>
</feature>
<feature type="helix" evidence="57">
    <location>
        <begin position="195"/>
        <end position="197"/>
    </location>
</feature>
<feature type="helix" evidence="58">
    <location>
        <begin position="201"/>
        <end position="210"/>
    </location>
</feature>
<feature type="turn" evidence="58">
    <location>
        <begin position="216"/>
        <end position="218"/>
    </location>
</feature>
<feature type="strand" evidence="59">
    <location>
        <begin position="223"/>
        <end position="225"/>
    </location>
</feature>
<feature type="turn" evidence="58">
    <location>
        <begin position="230"/>
        <end position="233"/>
    </location>
</feature>
<feature type="strand" evidence="58">
    <location>
        <begin position="241"/>
        <end position="245"/>
    </location>
</feature>
<feature type="helix" evidence="58">
    <location>
        <begin position="251"/>
        <end position="260"/>
    </location>
</feature>
<feature type="strand" evidence="58">
    <location>
        <begin position="263"/>
        <end position="267"/>
    </location>
</feature>
<feature type="helix" evidence="58">
    <location>
        <begin position="272"/>
        <end position="275"/>
    </location>
</feature>
<feature type="strand" evidence="58">
    <location>
        <begin position="279"/>
        <end position="282"/>
    </location>
</feature>
<feature type="strand" evidence="58">
    <location>
        <begin position="292"/>
        <end position="300"/>
    </location>
</feature>
<feature type="strand" evidence="58">
    <location>
        <begin position="303"/>
        <end position="307"/>
    </location>
</feature>
<feature type="strand" evidence="56">
    <location>
        <begin position="312"/>
        <end position="314"/>
    </location>
</feature>
<feature type="turn" evidence="61">
    <location>
        <begin position="315"/>
        <end position="317"/>
    </location>
</feature>
<feature type="strand" evidence="58">
    <location>
        <begin position="319"/>
        <end position="323"/>
    </location>
</feature>
<feature type="strand" evidence="58">
    <location>
        <begin position="325"/>
        <end position="327"/>
    </location>
</feature>
<feature type="helix" evidence="58">
    <location>
        <begin position="332"/>
        <end position="334"/>
    </location>
</feature>
<feature type="strand" evidence="58">
    <location>
        <begin position="340"/>
        <end position="343"/>
    </location>
</feature>
<sequence length="345" mass="38922">MAMIPSISKLLFVAICLFVYMGLSFGDFSIVGYSQNDLTSTERLIQLFESWMLKHNKIYKNIDEKIYRFEIFKDNLKYIDETNKKNNSYWLGLNVFADMSNDEFKEKYTGSIAGNYTTTELSYEEVLNDGDVNIPEYVDWRQKGAVTPVKNQGSCGSCWAFSAVVTIEGIIKIRTGNLNEYSEQELLDCDRRSYGCNGGYPWSALQLVAQYGIHYRNTYPYEGVQRYCRSREKGPYAAKTDGVRQVQPYNEGALLYSIANQPVSVVLEAAGKDFQLYRGGIFVGPCGNKVDHAVAAVGYGPNYILIKNSWGTGWGENGYIRIKRGTGNSYGVCGLYTSSFYPVKN</sequence>